<organism>
    <name type="scientific">Escherichia coli (strain K12)</name>
    <dbReference type="NCBI Taxonomy" id="83333"/>
    <lineage>
        <taxon>Bacteria</taxon>
        <taxon>Pseudomonadati</taxon>
        <taxon>Pseudomonadota</taxon>
        <taxon>Gammaproteobacteria</taxon>
        <taxon>Enterobacterales</taxon>
        <taxon>Enterobacteriaceae</taxon>
        <taxon>Escherichia</taxon>
    </lineage>
</organism>
<comment type="function">
    <text evidence="2">Conversion of NADPH, generated by peripheral catabolic pathways, to NADH, which can enter the respiratory chain for energy generation.</text>
</comment>
<comment type="catalytic activity">
    <reaction evidence="2">
        <text>NAD(+) + NADPH = NADH + NADP(+)</text>
        <dbReference type="Rhea" id="RHEA:11692"/>
        <dbReference type="ChEBI" id="CHEBI:57540"/>
        <dbReference type="ChEBI" id="CHEBI:57783"/>
        <dbReference type="ChEBI" id="CHEBI:57945"/>
        <dbReference type="ChEBI" id="CHEBI:58349"/>
        <dbReference type="EC" id="1.6.1.1"/>
    </reaction>
    <physiologicalReaction direction="left-to-right" evidence="2">
        <dbReference type="Rhea" id="RHEA:11693"/>
    </physiologicalReaction>
</comment>
<comment type="cofactor">
    <cofactor evidence="2">
        <name>FAD</name>
        <dbReference type="ChEBI" id="CHEBI:57692"/>
    </cofactor>
    <text>Binds 1 FAD per subunit.</text>
</comment>
<comment type="subunit">
    <text evidence="2">Homooligomer; probable homooctamer.</text>
</comment>
<comment type="subcellular location">
    <subcellularLocation>
        <location>Cytoplasm</location>
    </subcellularLocation>
</comment>
<comment type="similarity">
    <text evidence="3">Belongs to the class-I pyridine nucleotide-disulfide oxidoreductase family.</text>
</comment>
<comment type="sequence caution" evidence="3">
    <conflict type="frameshift">
        <sequence resource="EMBL-CDS" id="AAC43068"/>
    </conflict>
</comment>
<comment type="sequence caution" evidence="3">
    <conflict type="frameshift">
        <sequence resource="EMBL-CDS" id="CAA46822"/>
    </conflict>
</comment>
<proteinExistence type="evidence at protein level"/>
<keyword id="KW-0963">Cytoplasm</keyword>
<keyword id="KW-0903">Direct protein sequencing</keyword>
<keyword id="KW-0274">FAD</keyword>
<keyword id="KW-0285">Flavoprotein</keyword>
<keyword id="KW-0520">NAD</keyword>
<keyword id="KW-0521">NADP</keyword>
<keyword id="KW-0560">Oxidoreductase</keyword>
<keyword id="KW-1185">Reference proteome</keyword>
<accession>P27306</accession>
<accession>Q2M8Q7</accession>
<protein>
    <recommendedName>
        <fullName>Soluble pyridine nucleotide transhydrogenase</fullName>
        <shortName>STH</shortName>
        <ecNumber evidence="2">1.6.1.1</ecNumber>
    </recommendedName>
    <alternativeName>
        <fullName>NAD(P)(+) transhydrogenase [B-specific]</fullName>
    </alternativeName>
</protein>
<evidence type="ECO:0000250" key="1"/>
<evidence type="ECO:0000269" key="2">
    <source>
    </source>
</evidence>
<evidence type="ECO:0000305" key="3"/>
<dbReference type="EC" id="1.6.1.1" evidence="2"/>
<dbReference type="EMBL" id="U00006">
    <property type="protein sequence ID" value="AAC43068.1"/>
    <property type="status" value="ALT_FRAME"/>
    <property type="molecule type" value="Genomic_DNA"/>
</dbReference>
<dbReference type="EMBL" id="U00096">
    <property type="protein sequence ID" value="AAC76944.2"/>
    <property type="molecule type" value="Genomic_DNA"/>
</dbReference>
<dbReference type="EMBL" id="AP009048">
    <property type="protein sequence ID" value="BAE77349.1"/>
    <property type="molecule type" value="Genomic_DNA"/>
</dbReference>
<dbReference type="EMBL" id="X66026">
    <property type="protein sequence ID" value="CAA46822.1"/>
    <property type="status" value="ALT_FRAME"/>
    <property type="molecule type" value="Genomic_DNA"/>
</dbReference>
<dbReference type="EMBL" id="X16531">
    <property type="status" value="NOT_ANNOTATED_CDS"/>
    <property type="molecule type" value="Genomic_DNA"/>
</dbReference>
<dbReference type="PIR" id="E65203">
    <property type="entry name" value="E65203"/>
</dbReference>
<dbReference type="RefSeq" id="NP_418397.2">
    <property type="nucleotide sequence ID" value="NC_000913.3"/>
</dbReference>
<dbReference type="RefSeq" id="WP_001120810.1">
    <property type="nucleotide sequence ID" value="NZ_STEB01000037.1"/>
</dbReference>
<dbReference type="SMR" id="P27306"/>
<dbReference type="BioGRID" id="4263449">
    <property type="interactions" value="15"/>
</dbReference>
<dbReference type="BioGRID" id="852757">
    <property type="interactions" value="1"/>
</dbReference>
<dbReference type="FunCoup" id="P27306">
    <property type="interactions" value="102"/>
</dbReference>
<dbReference type="IntAct" id="P27306">
    <property type="interactions" value="1"/>
</dbReference>
<dbReference type="STRING" id="511145.b3962"/>
<dbReference type="jPOST" id="P27306"/>
<dbReference type="PaxDb" id="511145-b3962"/>
<dbReference type="EnsemblBacteria" id="AAC76944">
    <property type="protein sequence ID" value="AAC76944"/>
    <property type="gene ID" value="b3962"/>
</dbReference>
<dbReference type="GeneID" id="75203206"/>
<dbReference type="GeneID" id="948461"/>
<dbReference type="KEGG" id="ecj:JW5551"/>
<dbReference type="KEGG" id="eco:b3962"/>
<dbReference type="KEGG" id="ecoc:C3026_21410"/>
<dbReference type="PATRIC" id="fig|1411691.4.peg.2743"/>
<dbReference type="EchoBASE" id="EB1398"/>
<dbReference type="eggNOG" id="COG1249">
    <property type="taxonomic scope" value="Bacteria"/>
</dbReference>
<dbReference type="HOGENOM" id="CLU_016755_0_0_6"/>
<dbReference type="InParanoid" id="P27306"/>
<dbReference type="OMA" id="SHCLMAV"/>
<dbReference type="OrthoDB" id="9800167at2"/>
<dbReference type="PhylomeDB" id="P27306"/>
<dbReference type="BioCyc" id="EcoCyc:UDHA-MONOMER"/>
<dbReference type="BioCyc" id="MetaCyc:UDHA-MONOMER"/>
<dbReference type="BRENDA" id="1.6.1.1">
    <property type="organism ID" value="2026"/>
</dbReference>
<dbReference type="PRO" id="PR:P27306"/>
<dbReference type="Proteomes" id="UP000000625">
    <property type="component" value="Chromosome"/>
</dbReference>
<dbReference type="GO" id="GO:0005829">
    <property type="term" value="C:cytosol"/>
    <property type="evidence" value="ECO:0000314"/>
    <property type="project" value="EcoCyc"/>
</dbReference>
<dbReference type="GO" id="GO:0004148">
    <property type="term" value="F:dihydrolipoyl dehydrogenase (NADH) activity"/>
    <property type="evidence" value="ECO:0000318"/>
    <property type="project" value="GO_Central"/>
</dbReference>
<dbReference type="GO" id="GO:0050660">
    <property type="term" value="F:flavin adenine dinucleotide binding"/>
    <property type="evidence" value="ECO:0000314"/>
    <property type="project" value="EcoCyc"/>
</dbReference>
<dbReference type="GO" id="GO:0042802">
    <property type="term" value="F:identical protein binding"/>
    <property type="evidence" value="ECO:0000314"/>
    <property type="project" value="EcoCyc"/>
</dbReference>
<dbReference type="GO" id="GO:0003957">
    <property type="term" value="F:NAD(P)+ transhydrogenase (Si-specific) activity"/>
    <property type="evidence" value="ECO:0000314"/>
    <property type="project" value="EcoCyc"/>
</dbReference>
<dbReference type="GO" id="GO:0006103">
    <property type="term" value="P:2-oxoglutarate metabolic process"/>
    <property type="evidence" value="ECO:0000318"/>
    <property type="project" value="GO_Central"/>
</dbReference>
<dbReference type="GO" id="GO:0045454">
    <property type="term" value="P:cell redox homeostasis"/>
    <property type="evidence" value="ECO:0000315"/>
    <property type="project" value="EcoCyc"/>
</dbReference>
<dbReference type="GO" id="GO:0006739">
    <property type="term" value="P:NADP metabolic process"/>
    <property type="evidence" value="ECO:0007669"/>
    <property type="project" value="UniProtKB-UniRule"/>
</dbReference>
<dbReference type="GO" id="GO:0006090">
    <property type="term" value="P:pyruvate metabolic process"/>
    <property type="evidence" value="ECO:0000318"/>
    <property type="project" value="GO_Central"/>
</dbReference>
<dbReference type="FunFam" id="3.30.390.30:FF:000002">
    <property type="entry name" value="Soluble pyridine nucleotide transhydrogenase"/>
    <property type="match status" value="1"/>
</dbReference>
<dbReference type="FunFam" id="3.50.50.60:FF:000008">
    <property type="entry name" value="Soluble pyridine nucleotide transhydrogenase"/>
    <property type="match status" value="1"/>
</dbReference>
<dbReference type="Gene3D" id="3.30.390.30">
    <property type="match status" value="1"/>
</dbReference>
<dbReference type="Gene3D" id="3.50.50.60">
    <property type="entry name" value="FAD/NAD(P)-binding domain"/>
    <property type="match status" value="2"/>
</dbReference>
<dbReference type="HAMAP" id="MF_00247">
    <property type="entry name" value="SthA"/>
    <property type="match status" value="1"/>
</dbReference>
<dbReference type="InterPro" id="IPR050151">
    <property type="entry name" value="Class-I_Pyr_Nuc-Dis_Oxidored"/>
</dbReference>
<dbReference type="InterPro" id="IPR036188">
    <property type="entry name" value="FAD/NAD-bd_sf"/>
</dbReference>
<dbReference type="InterPro" id="IPR023753">
    <property type="entry name" value="FAD/NAD-binding_dom"/>
</dbReference>
<dbReference type="InterPro" id="IPR016156">
    <property type="entry name" value="FAD/NAD-linked_Rdtase_dimer_sf"/>
</dbReference>
<dbReference type="InterPro" id="IPR001100">
    <property type="entry name" value="Pyr_nuc-diS_OxRdtase"/>
</dbReference>
<dbReference type="InterPro" id="IPR004099">
    <property type="entry name" value="Pyr_nucl-diS_OxRdtase_dimer"/>
</dbReference>
<dbReference type="InterPro" id="IPR022962">
    <property type="entry name" value="STH_gammaproteobact"/>
</dbReference>
<dbReference type="NCBIfam" id="NF003585">
    <property type="entry name" value="PRK05249.1"/>
    <property type="match status" value="1"/>
</dbReference>
<dbReference type="PANTHER" id="PTHR22912">
    <property type="entry name" value="DISULFIDE OXIDOREDUCTASE"/>
    <property type="match status" value="1"/>
</dbReference>
<dbReference type="PANTHER" id="PTHR22912:SF93">
    <property type="entry name" value="SOLUBLE PYRIDINE NUCLEOTIDE TRANSHYDROGENASE"/>
    <property type="match status" value="1"/>
</dbReference>
<dbReference type="Pfam" id="PF07992">
    <property type="entry name" value="Pyr_redox_2"/>
    <property type="match status" value="1"/>
</dbReference>
<dbReference type="Pfam" id="PF02852">
    <property type="entry name" value="Pyr_redox_dim"/>
    <property type="match status" value="1"/>
</dbReference>
<dbReference type="PIRSF" id="PIRSF000350">
    <property type="entry name" value="Mercury_reductase_MerA"/>
    <property type="match status" value="1"/>
</dbReference>
<dbReference type="PRINTS" id="PR00368">
    <property type="entry name" value="FADPNR"/>
</dbReference>
<dbReference type="PRINTS" id="PR00411">
    <property type="entry name" value="PNDRDTASEI"/>
</dbReference>
<dbReference type="SUPFAM" id="SSF51905">
    <property type="entry name" value="FAD/NAD(P)-binding domain"/>
    <property type="match status" value="1"/>
</dbReference>
<dbReference type="SUPFAM" id="SSF55424">
    <property type="entry name" value="FAD/NAD-linked reductases, dimerisation (C-terminal) domain"/>
    <property type="match status" value="1"/>
</dbReference>
<name>STHA_ECOLI</name>
<reference key="1">
    <citation type="journal article" date="1999" name="J. Bacteriol.">
        <title>The udhA gene of Escherichia coli encodes a soluble pyridine nucleotide transhydrogenase.</title>
        <authorList>
            <person name="Boonstra B."/>
            <person name="French C.E."/>
            <person name="Wainwright I."/>
            <person name="Bruce N.C."/>
        </authorList>
    </citation>
    <scope>NUCLEOTIDE SEQUENCE [GENOMIC DNA]</scope>
    <scope>PROTEIN SEQUENCE OF 2-27</scope>
    <scope>FUNCTION</scope>
    <scope>CATALYTIC ACTIVITY</scope>
    <scope>COFACTOR</scope>
    <scope>SUBUNIT</scope>
</reference>
<reference key="2">
    <citation type="journal article" date="1993" name="Nucleic Acids Res.">
        <title>Analysis of the Escherichia coli genome. IV. DNA sequence of the region from 89.2 to 92.8 minutes.</title>
        <authorList>
            <person name="Blattner F.R."/>
            <person name="Burland V.D."/>
            <person name="Plunkett G. III"/>
            <person name="Sofia H.J."/>
            <person name="Daniels D.L."/>
        </authorList>
    </citation>
    <scope>NUCLEOTIDE SEQUENCE [LARGE SCALE GENOMIC DNA]</scope>
    <source>
        <strain>K12 / MG1655 / ATCC 47076</strain>
    </source>
</reference>
<reference key="3">
    <citation type="journal article" date="1997" name="Science">
        <title>The complete genome sequence of Escherichia coli K-12.</title>
        <authorList>
            <person name="Blattner F.R."/>
            <person name="Plunkett G. III"/>
            <person name="Bloch C.A."/>
            <person name="Perna N.T."/>
            <person name="Burland V."/>
            <person name="Riley M."/>
            <person name="Collado-Vides J."/>
            <person name="Glasner J.D."/>
            <person name="Rode C.K."/>
            <person name="Mayhew G.F."/>
            <person name="Gregor J."/>
            <person name="Davis N.W."/>
            <person name="Kirkpatrick H.A."/>
            <person name="Goeden M.A."/>
            <person name="Rose D.J."/>
            <person name="Mau B."/>
            <person name="Shao Y."/>
        </authorList>
    </citation>
    <scope>NUCLEOTIDE SEQUENCE [LARGE SCALE GENOMIC DNA]</scope>
    <scope>SEQUENCE REVISION</scope>
    <source>
        <strain>K12 / MG1655 / ATCC 47076</strain>
    </source>
</reference>
<reference key="4">
    <citation type="journal article" date="2006" name="Mol. Syst. Biol.">
        <title>Highly accurate genome sequences of Escherichia coli K-12 strains MG1655 and W3110.</title>
        <authorList>
            <person name="Hayashi K."/>
            <person name="Morooka N."/>
            <person name="Yamamoto Y."/>
            <person name="Fujita K."/>
            <person name="Isono K."/>
            <person name="Choi S."/>
            <person name="Ohtsubo E."/>
            <person name="Baba T."/>
            <person name="Wanner B.L."/>
            <person name="Mori H."/>
            <person name="Horiuchi T."/>
        </authorList>
    </citation>
    <scope>NUCLEOTIDE SEQUENCE [LARGE SCALE GENOMIC DNA]</scope>
    <source>
        <strain>K12 / W3110 / ATCC 27325 / DSM 5911</strain>
    </source>
</reference>
<reference key="5">
    <citation type="journal article" date="1992" name="J. Bacteriol.">
        <title>Physical map of the oxyR-trmA region (minute 89.3) of the Escherichia coli chromosome.</title>
        <authorList>
            <person name="Gustafsson C."/>
            <person name="Warne S.R."/>
        </authorList>
    </citation>
    <scope>NUCLEOTIDE SEQUENCE [GENOMIC DNA] OF 1-346</scope>
    <source>
        <strain>K12</strain>
    </source>
</reference>
<reference key="6">
    <citation type="journal article" date="1989" name="Mol. Gen. Genet.">
        <title>Molecular cloning and nucleotide sequencing of oxyR, the positive regulatory gene of a regulon for an adaptive response to oxidative stress in Escherichia coli: homologies between OxyR protein and a family of bacterial activator proteins.</title>
        <authorList>
            <person name="Tao K."/>
            <person name="Makino K."/>
            <person name="Yonei S."/>
            <person name="Nakata A."/>
            <person name="Shinagawa H."/>
        </authorList>
    </citation>
    <scope>NUCLEOTIDE SEQUENCE [GENOMIC DNA] OF 347-466</scope>
</reference>
<feature type="initiator methionine" description="Removed" evidence="2">
    <location>
        <position position="1"/>
    </location>
</feature>
<feature type="chain" id="PRO_0000068061" description="Soluble pyridine nucleotide transhydrogenase">
    <location>
        <begin position="2"/>
        <end position="466"/>
    </location>
</feature>
<feature type="binding site" evidence="1">
    <location>
        <begin position="36"/>
        <end position="45"/>
    </location>
    <ligand>
        <name>FAD</name>
        <dbReference type="ChEBI" id="CHEBI:57692"/>
    </ligand>
</feature>
<feature type="sequence conflict" description="In Ref. 5; CAA46822." evidence="3" ref="5">
    <original>I</original>
    <variation>L</variation>
    <location>
        <position position="64"/>
    </location>
</feature>
<feature type="sequence conflict" description="In Ref. 5; CAA46822." evidence="3" ref="5">
    <original>R</original>
    <variation>L</variation>
    <location>
        <position position="118"/>
    </location>
</feature>
<gene>
    <name type="primary">sthA</name>
    <name type="synonym">sth</name>
    <name type="synonym">udhA</name>
    <name type="ordered locus">b3962</name>
    <name type="ordered locus">JW5551</name>
</gene>
<sequence>MPHSYDYDAIVIGSGPGGEGAAMGLVKQGARVAVIERYQNVGGGCTHWGTIPSKALRHAVSRIIEFNQNPLYSDHSRLLRSSFADILNHADNVINQQTRMRQGFYERNHCEILQGNARFVDEHTLALDCPDGSVETLTAEKFVIACGSRPYHPTDVDFTHPRIYDSDSILSMHHEPRHVLIYGAGVIGCEYASIFRGMDVKVDLINTRDRLLAFLDQEMSDSLSYHFWNSGVVIRHNEEYEKIEGCDDGVIMHLKSGKKLKADCLLYANGRTGNTDSLALQNIGLETDSRGQLKVNSMYQTAQPHVYAVGDVIGYPSLASAAYDQGRIAAQALVKGEATAHLIEDIPTGIYTIPEISSVGKTEQQLTAMKVPYEVGRAQFKHLARAQIVGMNVGTLKILFHRETKEILGIHCFGERAAEIIHIGQAIMEQKGGGNTIEYFVNTTFNYPTMAEAYRVAALNGLNRLF</sequence>